<gene>
    <name evidence="1" type="primary">glgC</name>
    <name type="ordered locus">SSON_3670</name>
</gene>
<evidence type="ECO:0000255" key="1">
    <source>
        <dbReference type="HAMAP-Rule" id="MF_00624"/>
    </source>
</evidence>
<proteinExistence type="inferred from homology"/>
<protein>
    <recommendedName>
        <fullName evidence="1">Glucose-1-phosphate adenylyltransferase</fullName>
        <ecNumber evidence="1">2.7.7.27</ecNumber>
    </recommendedName>
    <alternativeName>
        <fullName evidence="1">ADP-glucose pyrophosphorylase</fullName>
        <shortName evidence="1">ADPGlc PPase</shortName>
    </alternativeName>
    <alternativeName>
        <fullName evidence="1">ADP-glucose synthase</fullName>
    </alternativeName>
</protein>
<accession>Q3YW95</accession>
<comment type="function">
    <text evidence="1">Involved in the biosynthesis of ADP-glucose, a building block required for the elongation reactions to produce glycogen. Catalyzes the reaction between ATP and alpha-D-glucose 1-phosphate (G1P) to produce pyrophosphate and ADP-Glc.</text>
</comment>
<comment type="catalytic activity">
    <reaction evidence="1">
        <text>alpha-D-glucose 1-phosphate + ATP + H(+) = ADP-alpha-D-glucose + diphosphate</text>
        <dbReference type="Rhea" id="RHEA:12120"/>
        <dbReference type="ChEBI" id="CHEBI:15378"/>
        <dbReference type="ChEBI" id="CHEBI:30616"/>
        <dbReference type="ChEBI" id="CHEBI:33019"/>
        <dbReference type="ChEBI" id="CHEBI:57498"/>
        <dbReference type="ChEBI" id="CHEBI:58601"/>
        <dbReference type="EC" id="2.7.7.27"/>
    </reaction>
</comment>
<comment type="activity regulation">
    <text evidence="1">Allosterically activated by fructose-1,6-bisphosphate (F16BP) and inhibited by AMP.</text>
</comment>
<comment type="pathway">
    <text evidence="1">Glycan biosynthesis; glycogen biosynthesis.</text>
</comment>
<comment type="subunit">
    <text evidence="1">Homotetramer.</text>
</comment>
<comment type="similarity">
    <text evidence="1">Belongs to the bacterial/plant glucose-1-phosphate adenylyltransferase family.</text>
</comment>
<dbReference type="EC" id="2.7.7.27" evidence="1"/>
<dbReference type="EMBL" id="CP000038">
    <property type="protein sequence ID" value="AAZ90217.1"/>
    <property type="molecule type" value="Genomic_DNA"/>
</dbReference>
<dbReference type="RefSeq" id="WP_000253975.1">
    <property type="nucleotide sequence ID" value="NC_007384.1"/>
</dbReference>
<dbReference type="SMR" id="Q3YW95"/>
<dbReference type="GeneID" id="93778559"/>
<dbReference type="KEGG" id="ssn:SSON_3670"/>
<dbReference type="HOGENOM" id="CLU_029499_14_1_6"/>
<dbReference type="UniPathway" id="UPA00164"/>
<dbReference type="Proteomes" id="UP000002529">
    <property type="component" value="Chromosome"/>
</dbReference>
<dbReference type="GO" id="GO:0005524">
    <property type="term" value="F:ATP binding"/>
    <property type="evidence" value="ECO:0007669"/>
    <property type="project" value="UniProtKB-KW"/>
</dbReference>
<dbReference type="GO" id="GO:0008878">
    <property type="term" value="F:glucose-1-phosphate adenylyltransferase activity"/>
    <property type="evidence" value="ECO:0007669"/>
    <property type="project" value="UniProtKB-UniRule"/>
</dbReference>
<dbReference type="GO" id="GO:0005978">
    <property type="term" value="P:glycogen biosynthetic process"/>
    <property type="evidence" value="ECO:0007669"/>
    <property type="project" value="UniProtKB-UniRule"/>
</dbReference>
<dbReference type="CDD" id="cd02508">
    <property type="entry name" value="ADP_Glucose_PP"/>
    <property type="match status" value="1"/>
</dbReference>
<dbReference type="CDD" id="cd04651">
    <property type="entry name" value="LbH_G1P_AT_C"/>
    <property type="match status" value="1"/>
</dbReference>
<dbReference type="FunFam" id="2.160.10.10:FF:000006">
    <property type="entry name" value="Glucose-1-phosphate adenylyltransferase"/>
    <property type="match status" value="1"/>
</dbReference>
<dbReference type="FunFam" id="3.90.550.10:FF:000014">
    <property type="entry name" value="Glucose-1-phosphate adenylyltransferase"/>
    <property type="match status" value="1"/>
</dbReference>
<dbReference type="Gene3D" id="2.160.10.10">
    <property type="entry name" value="Hexapeptide repeat proteins"/>
    <property type="match status" value="1"/>
</dbReference>
<dbReference type="Gene3D" id="3.90.550.10">
    <property type="entry name" value="Spore Coat Polysaccharide Biosynthesis Protein SpsA, Chain A"/>
    <property type="match status" value="1"/>
</dbReference>
<dbReference type="HAMAP" id="MF_00624">
    <property type="entry name" value="GlgC"/>
    <property type="match status" value="1"/>
</dbReference>
<dbReference type="InterPro" id="IPR011831">
    <property type="entry name" value="ADP-Glc_PPase"/>
</dbReference>
<dbReference type="InterPro" id="IPR005836">
    <property type="entry name" value="ADP_Glu_pyroP_CS"/>
</dbReference>
<dbReference type="InterPro" id="IPR023049">
    <property type="entry name" value="GlgC_bac"/>
</dbReference>
<dbReference type="InterPro" id="IPR056818">
    <property type="entry name" value="GlmU/GlgC-like_hexapep"/>
</dbReference>
<dbReference type="InterPro" id="IPR005835">
    <property type="entry name" value="NTP_transferase_dom"/>
</dbReference>
<dbReference type="InterPro" id="IPR029044">
    <property type="entry name" value="Nucleotide-diphossugar_trans"/>
</dbReference>
<dbReference type="InterPro" id="IPR011004">
    <property type="entry name" value="Trimer_LpxA-like_sf"/>
</dbReference>
<dbReference type="NCBIfam" id="TIGR02091">
    <property type="entry name" value="glgC"/>
    <property type="match status" value="1"/>
</dbReference>
<dbReference type="NCBIfam" id="NF001947">
    <property type="entry name" value="PRK00725.1"/>
    <property type="match status" value="1"/>
</dbReference>
<dbReference type="NCBIfam" id="NF002023">
    <property type="entry name" value="PRK00844.1"/>
    <property type="match status" value="1"/>
</dbReference>
<dbReference type="PANTHER" id="PTHR43523:SF2">
    <property type="entry name" value="GLUCOSE-1-PHOSPHATE ADENYLYLTRANSFERASE"/>
    <property type="match status" value="1"/>
</dbReference>
<dbReference type="PANTHER" id="PTHR43523">
    <property type="entry name" value="GLUCOSE-1-PHOSPHATE ADENYLYLTRANSFERASE-RELATED"/>
    <property type="match status" value="1"/>
</dbReference>
<dbReference type="Pfam" id="PF24894">
    <property type="entry name" value="Hexapep_GlmU"/>
    <property type="match status" value="1"/>
</dbReference>
<dbReference type="Pfam" id="PF00483">
    <property type="entry name" value="NTP_transferase"/>
    <property type="match status" value="1"/>
</dbReference>
<dbReference type="SUPFAM" id="SSF53448">
    <property type="entry name" value="Nucleotide-diphospho-sugar transferases"/>
    <property type="match status" value="1"/>
</dbReference>
<dbReference type="SUPFAM" id="SSF51161">
    <property type="entry name" value="Trimeric LpxA-like enzymes"/>
    <property type="match status" value="1"/>
</dbReference>
<dbReference type="PROSITE" id="PS00808">
    <property type="entry name" value="ADP_GLC_PYROPHOSPH_1"/>
    <property type="match status" value="1"/>
</dbReference>
<dbReference type="PROSITE" id="PS00809">
    <property type="entry name" value="ADP_GLC_PYROPHOSPH_2"/>
    <property type="match status" value="1"/>
</dbReference>
<dbReference type="PROSITE" id="PS00810">
    <property type="entry name" value="ADP_GLC_PYROPHOSPH_3"/>
    <property type="match status" value="1"/>
</dbReference>
<sequence length="431" mass="48698">MVSLEKNDHLMLARQLPLKSVALILAGGRGTRLKDLTNKRAKPAVHFGGKFRIIDFALSNCINSGIRRMGVITQYQSHTLVQHIQRGWSFFNEEMNEFVDLLPAQQRMKGENWYRGTADAVTQNLDIIRRYKAEYVVILAGDHIYKQDYSRMLIDHVEKGARCTVACMPVPIEEASAFGVMAVDENDKIIEFVEKPANPPSMPNDPSKSLASMGIYVFDADYLYELLEEDDRDENSSHDFGKDLIPKITEAGLAYAHPFPLSCVQSDPDAEPYWRDVGTLEAYWKANLDLASVVPELDMYDRNWPIRTYNESLPPAKFVQDRSGSHGMTLNSLVSGGCVISGSVVVQSVLFSRVRVNSFCNIDSAVLLPEVWVGRSCRLRRCVIDRACVIPEGMVIGENAEEDARRFYRSEEGIVLVTREMLRKLGHKQER</sequence>
<reference key="1">
    <citation type="journal article" date="2005" name="Nucleic Acids Res.">
        <title>Genome dynamics and diversity of Shigella species, the etiologic agents of bacillary dysentery.</title>
        <authorList>
            <person name="Yang F."/>
            <person name="Yang J."/>
            <person name="Zhang X."/>
            <person name="Chen L."/>
            <person name="Jiang Y."/>
            <person name="Yan Y."/>
            <person name="Tang X."/>
            <person name="Wang J."/>
            <person name="Xiong Z."/>
            <person name="Dong J."/>
            <person name="Xue Y."/>
            <person name="Zhu Y."/>
            <person name="Xu X."/>
            <person name="Sun L."/>
            <person name="Chen S."/>
            <person name="Nie H."/>
            <person name="Peng J."/>
            <person name="Xu J."/>
            <person name="Wang Y."/>
            <person name="Yuan Z."/>
            <person name="Wen Y."/>
            <person name="Yao Z."/>
            <person name="Shen Y."/>
            <person name="Qiang B."/>
            <person name="Hou Y."/>
            <person name="Yu J."/>
            <person name="Jin Q."/>
        </authorList>
    </citation>
    <scope>NUCLEOTIDE SEQUENCE [LARGE SCALE GENOMIC DNA]</scope>
    <source>
        <strain>Ss046</strain>
    </source>
</reference>
<keyword id="KW-0021">Allosteric enzyme</keyword>
<keyword id="KW-0067">ATP-binding</keyword>
<keyword id="KW-0119">Carbohydrate metabolism</keyword>
<keyword id="KW-0320">Glycogen biosynthesis</keyword>
<keyword id="KW-0321">Glycogen metabolism</keyword>
<keyword id="KW-0547">Nucleotide-binding</keyword>
<keyword id="KW-0548">Nucleotidyltransferase</keyword>
<keyword id="KW-1185">Reference proteome</keyword>
<keyword id="KW-0808">Transferase</keyword>
<name>GLGC_SHISS</name>
<organism>
    <name type="scientific">Shigella sonnei (strain Ss046)</name>
    <dbReference type="NCBI Taxonomy" id="300269"/>
    <lineage>
        <taxon>Bacteria</taxon>
        <taxon>Pseudomonadati</taxon>
        <taxon>Pseudomonadota</taxon>
        <taxon>Gammaproteobacteria</taxon>
        <taxon>Enterobacterales</taxon>
        <taxon>Enterobacteriaceae</taxon>
        <taxon>Shigella</taxon>
    </lineage>
</organism>
<feature type="chain" id="PRO_0000261902" description="Glucose-1-phosphate adenylyltransferase">
    <location>
        <begin position="1"/>
        <end position="431"/>
    </location>
</feature>
<feature type="binding site" evidence="1">
    <location>
        <position position="39"/>
    </location>
    <ligand>
        <name>beta-D-fructose 1,6-bisphosphate</name>
        <dbReference type="ChEBI" id="CHEBI:32966"/>
    </ligand>
</feature>
<feature type="binding site" evidence="1">
    <location>
        <position position="40"/>
    </location>
    <ligand>
        <name>AMP</name>
        <dbReference type="ChEBI" id="CHEBI:456215"/>
    </ligand>
</feature>
<feature type="binding site" evidence="1">
    <location>
        <position position="46"/>
    </location>
    <ligand>
        <name>AMP</name>
        <dbReference type="ChEBI" id="CHEBI:456215"/>
    </ligand>
</feature>
<feature type="binding site" evidence="1">
    <location>
        <position position="52"/>
    </location>
    <ligand>
        <name>AMP</name>
        <dbReference type="ChEBI" id="CHEBI:456215"/>
    </ligand>
</feature>
<feature type="binding site" evidence="1">
    <location>
        <position position="114"/>
    </location>
    <ligand>
        <name>alpha-D-glucose 1-phosphate</name>
        <dbReference type="ChEBI" id="CHEBI:58601"/>
    </ligand>
</feature>
<feature type="binding site" evidence="1">
    <location>
        <position position="130"/>
    </location>
    <ligand>
        <name>AMP</name>
        <dbReference type="ChEBI" id="CHEBI:456215"/>
    </ligand>
</feature>
<feature type="binding site" evidence="1">
    <location>
        <position position="179"/>
    </location>
    <ligand>
        <name>alpha-D-glucose 1-phosphate</name>
        <dbReference type="ChEBI" id="CHEBI:58601"/>
    </ligand>
</feature>
<feature type="binding site" evidence="1">
    <location>
        <begin position="194"/>
        <end position="195"/>
    </location>
    <ligand>
        <name>alpha-D-glucose 1-phosphate</name>
        <dbReference type="ChEBI" id="CHEBI:58601"/>
    </ligand>
</feature>
<feature type="binding site" evidence="1">
    <location>
        <position position="212"/>
    </location>
    <ligand>
        <name>alpha-D-glucose 1-phosphate</name>
        <dbReference type="ChEBI" id="CHEBI:58601"/>
    </ligand>
</feature>
<feature type="binding site" evidence="1">
    <location>
        <position position="370"/>
    </location>
    <ligand>
        <name>AMP</name>
        <dbReference type="ChEBI" id="CHEBI:456215"/>
    </ligand>
</feature>
<feature type="binding site" evidence="1">
    <location>
        <position position="386"/>
    </location>
    <ligand>
        <name>AMP</name>
        <dbReference type="ChEBI" id="CHEBI:456215"/>
    </ligand>
</feature>
<feature type="binding site" evidence="1">
    <location>
        <begin position="419"/>
        <end position="423"/>
    </location>
    <ligand>
        <name>beta-D-fructose 1,6-bisphosphate</name>
        <dbReference type="ChEBI" id="CHEBI:32966"/>
    </ligand>
</feature>
<feature type="binding site" evidence="1">
    <location>
        <begin position="429"/>
        <end position="431"/>
    </location>
    <ligand>
        <name>beta-D-fructose 1,6-bisphosphate</name>
        <dbReference type="ChEBI" id="CHEBI:32966"/>
    </ligand>
</feature>
<feature type="site" description="Could play a key role in the communication between the regulatory and the substrate sites" evidence="1">
    <location>
        <position position="74"/>
    </location>
</feature>
<feature type="site" description="Could play a key role in the communication between the regulatory and the substrate sites" evidence="1">
    <location>
        <position position="113"/>
    </location>
</feature>